<keyword id="KW-0028">Amino-acid biosynthesis</keyword>
<keyword id="KW-0100">Branched-chain amino acid biosynthesis</keyword>
<keyword id="KW-0460">Magnesium</keyword>
<keyword id="KW-0479">Metal-binding</keyword>
<keyword id="KW-0521">NADP</keyword>
<keyword id="KW-0560">Oxidoreductase</keyword>
<evidence type="ECO:0000255" key="1">
    <source>
        <dbReference type="HAMAP-Rule" id="MF_00435"/>
    </source>
</evidence>
<evidence type="ECO:0000255" key="2">
    <source>
        <dbReference type="PROSITE-ProRule" id="PRU01197"/>
    </source>
</evidence>
<evidence type="ECO:0000255" key="3">
    <source>
        <dbReference type="PROSITE-ProRule" id="PRU01198"/>
    </source>
</evidence>
<sequence>MKVFYDKDCDLSLIKGKTVAIIGYGSQGHAHAQNLNDSGVKVVVGLRKGGASWDKVGKAGLTVLEVNEAVKSADVVMILLPDEQIAEVYKNNVEPNIKQGASLAFAHGFNVHYNQVVPRADLDVWMVAPKAPGHTVRSTYSQGGGVPHLVAVHQDKSGKARDLALSYAMANGGGKAGIIETNFKEETETDLFGEQAVLCGGAVELIKMGFETLVEAGYAPEMAYFECLHELKLIVDLIYEGGIANMNYSISNNAEFGEYVTGPEVINEQSRAAMRNALKRIQNGDYAKMFIQEGRLNYPSMTARRRNTADHKIEVVGAQLRAMMPWIAKNKLVDQSRN</sequence>
<accession>A1TRT6</accession>
<name>ILVC_PARC0</name>
<comment type="function">
    <text evidence="1">Involved in the biosynthesis of branched-chain amino acids (BCAA). Catalyzes an alkyl-migration followed by a ketol-acid reduction of (S)-2-acetolactate (S2AL) to yield (R)-2,3-dihydroxy-isovalerate. In the isomerase reaction, S2AL is rearranged via a Mg-dependent methyl migration to produce 3-hydroxy-3-methyl-2-ketobutyrate (HMKB). In the reductase reaction, this 2-ketoacid undergoes a metal-dependent reduction by NADPH to yield (R)-2,3-dihydroxy-isovalerate.</text>
</comment>
<comment type="catalytic activity">
    <reaction evidence="1">
        <text>(2R)-2,3-dihydroxy-3-methylbutanoate + NADP(+) = (2S)-2-acetolactate + NADPH + H(+)</text>
        <dbReference type="Rhea" id="RHEA:22068"/>
        <dbReference type="ChEBI" id="CHEBI:15378"/>
        <dbReference type="ChEBI" id="CHEBI:49072"/>
        <dbReference type="ChEBI" id="CHEBI:57783"/>
        <dbReference type="ChEBI" id="CHEBI:58349"/>
        <dbReference type="ChEBI" id="CHEBI:58476"/>
        <dbReference type="EC" id="1.1.1.86"/>
    </reaction>
</comment>
<comment type="catalytic activity">
    <reaction evidence="1">
        <text>(2R,3R)-2,3-dihydroxy-3-methylpentanoate + NADP(+) = (S)-2-ethyl-2-hydroxy-3-oxobutanoate + NADPH + H(+)</text>
        <dbReference type="Rhea" id="RHEA:13493"/>
        <dbReference type="ChEBI" id="CHEBI:15378"/>
        <dbReference type="ChEBI" id="CHEBI:49256"/>
        <dbReference type="ChEBI" id="CHEBI:49258"/>
        <dbReference type="ChEBI" id="CHEBI:57783"/>
        <dbReference type="ChEBI" id="CHEBI:58349"/>
        <dbReference type="EC" id="1.1.1.86"/>
    </reaction>
</comment>
<comment type="cofactor">
    <cofactor evidence="1">
        <name>Mg(2+)</name>
        <dbReference type="ChEBI" id="CHEBI:18420"/>
    </cofactor>
    <text evidence="1">Binds 2 magnesium ions per subunit.</text>
</comment>
<comment type="pathway">
    <text evidence="1">Amino-acid biosynthesis; L-isoleucine biosynthesis; L-isoleucine from 2-oxobutanoate: step 2/4.</text>
</comment>
<comment type="pathway">
    <text evidence="1">Amino-acid biosynthesis; L-valine biosynthesis; L-valine from pyruvate: step 2/4.</text>
</comment>
<comment type="similarity">
    <text evidence="1">Belongs to the ketol-acid reductoisomerase family.</text>
</comment>
<reference key="1">
    <citation type="submission" date="2006-12" db="EMBL/GenBank/DDBJ databases">
        <title>Complete sequence of Acidovorax avenae subsp. citrulli AAC00-1.</title>
        <authorList>
            <person name="Copeland A."/>
            <person name="Lucas S."/>
            <person name="Lapidus A."/>
            <person name="Barry K."/>
            <person name="Detter J.C."/>
            <person name="Glavina del Rio T."/>
            <person name="Dalin E."/>
            <person name="Tice H."/>
            <person name="Pitluck S."/>
            <person name="Kiss H."/>
            <person name="Brettin T."/>
            <person name="Bruce D."/>
            <person name="Han C."/>
            <person name="Tapia R."/>
            <person name="Gilna P."/>
            <person name="Schmutz J."/>
            <person name="Larimer F."/>
            <person name="Land M."/>
            <person name="Hauser L."/>
            <person name="Kyrpides N."/>
            <person name="Kim E."/>
            <person name="Stahl D."/>
            <person name="Richardson P."/>
        </authorList>
    </citation>
    <scope>NUCLEOTIDE SEQUENCE [LARGE SCALE GENOMIC DNA]</scope>
    <source>
        <strain>AAC00-1</strain>
    </source>
</reference>
<proteinExistence type="inferred from homology"/>
<dbReference type="EC" id="1.1.1.86" evidence="1"/>
<dbReference type="EMBL" id="CP000512">
    <property type="protein sequence ID" value="ABM33674.1"/>
    <property type="molecule type" value="Genomic_DNA"/>
</dbReference>
<dbReference type="RefSeq" id="WP_011796184.1">
    <property type="nucleotide sequence ID" value="NC_008752.1"/>
</dbReference>
<dbReference type="SMR" id="A1TRT6"/>
<dbReference type="STRING" id="397945.Aave_3110"/>
<dbReference type="GeneID" id="79792797"/>
<dbReference type="KEGG" id="aav:Aave_3110"/>
<dbReference type="eggNOG" id="COG0059">
    <property type="taxonomic scope" value="Bacteria"/>
</dbReference>
<dbReference type="HOGENOM" id="CLU_033821_0_1_4"/>
<dbReference type="OrthoDB" id="9804088at2"/>
<dbReference type="UniPathway" id="UPA00047">
    <property type="reaction ID" value="UER00056"/>
</dbReference>
<dbReference type="UniPathway" id="UPA00049">
    <property type="reaction ID" value="UER00060"/>
</dbReference>
<dbReference type="Proteomes" id="UP000002596">
    <property type="component" value="Chromosome"/>
</dbReference>
<dbReference type="GO" id="GO:0005829">
    <property type="term" value="C:cytosol"/>
    <property type="evidence" value="ECO:0007669"/>
    <property type="project" value="TreeGrafter"/>
</dbReference>
<dbReference type="GO" id="GO:0004455">
    <property type="term" value="F:ketol-acid reductoisomerase activity"/>
    <property type="evidence" value="ECO:0007669"/>
    <property type="project" value="UniProtKB-UniRule"/>
</dbReference>
<dbReference type="GO" id="GO:0000287">
    <property type="term" value="F:magnesium ion binding"/>
    <property type="evidence" value="ECO:0007669"/>
    <property type="project" value="UniProtKB-UniRule"/>
</dbReference>
<dbReference type="GO" id="GO:0050661">
    <property type="term" value="F:NADP binding"/>
    <property type="evidence" value="ECO:0007669"/>
    <property type="project" value="InterPro"/>
</dbReference>
<dbReference type="GO" id="GO:0009097">
    <property type="term" value="P:isoleucine biosynthetic process"/>
    <property type="evidence" value="ECO:0007669"/>
    <property type="project" value="UniProtKB-UniRule"/>
</dbReference>
<dbReference type="GO" id="GO:0009099">
    <property type="term" value="P:L-valine biosynthetic process"/>
    <property type="evidence" value="ECO:0007669"/>
    <property type="project" value="UniProtKB-UniRule"/>
</dbReference>
<dbReference type="FunFam" id="3.40.50.720:FF:000023">
    <property type="entry name" value="Ketol-acid reductoisomerase (NADP(+))"/>
    <property type="match status" value="1"/>
</dbReference>
<dbReference type="Gene3D" id="6.10.240.10">
    <property type="match status" value="1"/>
</dbReference>
<dbReference type="Gene3D" id="3.40.50.720">
    <property type="entry name" value="NAD(P)-binding Rossmann-like Domain"/>
    <property type="match status" value="1"/>
</dbReference>
<dbReference type="HAMAP" id="MF_00435">
    <property type="entry name" value="IlvC"/>
    <property type="match status" value="1"/>
</dbReference>
<dbReference type="InterPro" id="IPR008927">
    <property type="entry name" value="6-PGluconate_DH-like_C_sf"/>
</dbReference>
<dbReference type="InterPro" id="IPR013023">
    <property type="entry name" value="KARI"/>
</dbReference>
<dbReference type="InterPro" id="IPR000506">
    <property type="entry name" value="KARI_C"/>
</dbReference>
<dbReference type="InterPro" id="IPR013116">
    <property type="entry name" value="KARI_N"/>
</dbReference>
<dbReference type="InterPro" id="IPR014359">
    <property type="entry name" value="KARI_prok"/>
</dbReference>
<dbReference type="InterPro" id="IPR036291">
    <property type="entry name" value="NAD(P)-bd_dom_sf"/>
</dbReference>
<dbReference type="NCBIfam" id="TIGR00465">
    <property type="entry name" value="ilvC"/>
    <property type="match status" value="1"/>
</dbReference>
<dbReference type="NCBIfam" id="NF004017">
    <property type="entry name" value="PRK05479.1"/>
    <property type="match status" value="1"/>
</dbReference>
<dbReference type="NCBIfam" id="NF009940">
    <property type="entry name" value="PRK13403.1"/>
    <property type="match status" value="1"/>
</dbReference>
<dbReference type="PANTHER" id="PTHR21371">
    <property type="entry name" value="KETOL-ACID REDUCTOISOMERASE, MITOCHONDRIAL"/>
    <property type="match status" value="1"/>
</dbReference>
<dbReference type="PANTHER" id="PTHR21371:SF1">
    <property type="entry name" value="KETOL-ACID REDUCTOISOMERASE, MITOCHONDRIAL"/>
    <property type="match status" value="1"/>
</dbReference>
<dbReference type="Pfam" id="PF01450">
    <property type="entry name" value="KARI_C"/>
    <property type="match status" value="1"/>
</dbReference>
<dbReference type="Pfam" id="PF07991">
    <property type="entry name" value="KARI_N"/>
    <property type="match status" value="1"/>
</dbReference>
<dbReference type="PIRSF" id="PIRSF000116">
    <property type="entry name" value="IlvC_gammaproteo"/>
    <property type="match status" value="1"/>
</dbReference>
<dbReference type="SUPFAM" id="SSF48179">
    <property type="entry name" value="6-phosphogluconate dehydrogenase C-terminal domain-like"/>
    <property type="match status" value="1"/>
</dbReference>
<dbReference type="SUPFAM" id="SSF51735">
    <property type="entry name" value="NAD(P)-binding Rossmann-fold domains"/>
    <property type="match status" value="1"/>
</dbReference>
<dbReference type="PROSITE" id="PS51851">
    <property type="entry name" value="KARI_C"/>
    <property type="match status" value="1"/>
</dbReference>
<dbReference type="PROSITE" id="PS51850">
    <property type="entry name" value="KARI_N"/>
    <property type="match status" value="1"/>
</dbReference>
<feature type="chain" id="PRO_1000050470" description="Ketol-acid reductoisomerase (NADP(+))">
    <location>
        <begin position="1"/>
        <end position="338"/>
    </location>
</feature>
<feature type="domain" description="KARI N-terminal Rossmann" evidence="2">
    <location>
        <begin position="1"/>
        <end position="181"/>
    </location>
</feature>
<feature type="domain" description="KARI C-terminal knotted" evidence="3">
    <location>
        <begin position="182"/>
        <end position="327"/>
    </location>
</feature>
<feature type="active site" evidence="1">
    <location>
        <position position="107"/>
    </location>
</feature>
<feature type="binding site" evidence="1">
    <location>
        <begin position="24"/>
        <end position="27"/>
    </location>
    <ligand>
        <name>NADP(+)</name>
        <dbReference type="ChEBI" id="CHEBI:58349"/>
    </ligand>
</feature>
<feature type="binding site" evidence="1">
    <location>
        <position position="47"/>
    </location>
    <ligand>
        <name>NADP(+)</name>
        <dbReference type="ChEBI" id="CHEBI:58349"/>
    </ligand>
</feature>
<feature type="binding site" evidence="1">
    <location>
        <position position="52"/>
    </location>
    <ligand>
        <name>NADP(+)</name>
        <dbReference type="ChEBI" id="CHEBI:58349"/>
    </ligand>
</feature>
<feature type="binding site" evidence="1">
    <location>
        <position position="133"/>
    </location>
    <ligand>
        <name>NADP(+)</name>
        <dbReference type="ChEBI" id="CHEBI:58349"/>
    </ligand>
</feature>
<feature type="binding site" evidence="1">
    <location>
        <position position="190"/>
    </location>
    <ligand>
        <name>Mg(2+)</name>
        <dbReference type="ChEBI" id="CHEBI:18420"/>
        <label>1</label>
    </ligand>
</feature>
<feature type="binding site" evidence="1">
    <location>
        <position position="190"/>
    </location>
    <ligand>
        <name>Mg(2+)</name>
        <dbReference type="ChEBI" id="CHEBI:18420"/>
        <label>2</label>
    </ligand>
</feature>
<feature type="binding site" evidence="1">
    <location>
        <position position="194"/>
    </location>
    <ligand>
        <name>Mg(2+)</name>
        <dbReference type="ChEBI" id="CHEBI:18420"/>
        <label>1</label>
    </ligand>
</feature>
<feature type="binding site" evidence="1">
    <location>
        <position position="226"/>
    </location>
    <ligand>
        <name>Mg(2+)</name>
        <dbReference type="ChEBI" id="CHEBI:18420"/>
        <label>2</label>
    </ligand>
</feature>
<feature type="binding site" evidence="1">
    <location>
        <position position="230"/>
    </location>
    <ligand>
        <name>Mg(2+)</name>
        <dbReference type="ChEBI" id="CHEBI:18420"/>
        <label>2</label>
    </ligand>
</feature>
<feature type="binding site" evidence="1">
    <location>
        <position position="251"/>
    </location>
    <ligand>
        <name>substrate</name>
    </ligand>
</feature>
<gene>
    <name evidence="1" type="primary">ilvC</name>
    <name type="ordered locus">Aave_3110</name>
</gene>
<organism>
    <name type="scientific">Paracidovorax citrulli (strain AAC00-1)</name>
    <name type="common">Acidovorax citrulli</name>
    <dbReference type="NCBI Taxonomy" id="397945"/>
    <lineage>
        <taxon>Bacteria</taxon>
        <taxon>Pseudomonadati</taxon>
        <taxon>Pseudomonadota</taxon>
        <taxon>Betaproteobacteria</taxon>
        <taxon>Burkholderiales</taxon>
        <taxon>Comamonadaceae</taxon>
        <taxon>Paracidovorax</taxon>
    </lineage>
</organism>
<protein>
    <recommendedName>
        <fullName evidence="1">Ketol-acid reductoisomerase (NADP(+))</fullName>
        <shortName evidence="1">KARI</shortName>
        <ecNumber evidence="1">1.1.1.86</ecNumber>
    </recommendedName>
    <alternativeName>
        <fullName evidence="1">Acetohydroxy-acid isomeroreductase</fullName>
        <shortName evidence="1">AHIR</shortName>
    </alternativeName>
    <alternativeName>
        <fullName evidence="1">Alpha-keto-beta-hydroxylacyl reductoisomerase</fullName>
    </alternativeName>
    <alternativeName>
        <fullName evidence="1">Ketol-acid reductoisomerase type 1</fullName>
    </alternativeName>
    <alternativeName>
        <fullName evidence="1">Ketol-acid reductoisomerase type I</fullName>
    </alternativeName>
</protein>